<organism>
    <name type="scientific">Salmonella typhi</name>
    <dbReference type="NCBI Taxonomy" id="90370"/>
    <lineage>
        <taxon>Bacteria</taxon>
        <taxon>Pseudomonadati</taxon>
        <taxon>Pseudomonadota</taxon>
        <taxon>Gammaproteobacteria</taxon>
        <taxon>Enterobacterales</taxon>
        <taxon>Enterobacteriaceae</taxon>
        <taxon>Salmonella</taxon>
    </lineage>
</organism>
<gene>
    <name evidence="1" type="primary">glgC</name>
    <name type="ordered locus">STY4274</name>
    <name type="ordered locus">t3984</name>
</gene>
<keyword id="KW-0021">Allosteric enzyme</keyword>
<keyword id="KW-0067">ATP-binding</keyword>
<keyword id="KW-0119">Carbohydrate metabolism</keyword>
<keyword id="KW-0320">Glycogen biosynthesis</keyword>
<keyword id="KW-0321">Glycogen metabolism</keyword>
<keyword id="KW-0547">Nucleotide-binding</keyword>
<keyword id="KW-0548">Nucleotidyltransferase</keyword>
<keyword id="KW-0808">Transferase</keyword>
<protein>
    <recommendedName>
        <fullName evidence="1">Glucose-1-phosphate adenylyltransferase</fullName>
        <ecNumber evidence="1">2.7.7.27</ecNumber>
    </recommendedName>
    <alternativeName>
        <fullName evidence="1">ADP-glucose pyrophosphorylase</fullName>
        <shortName evidence="1">ADPGlc PPase</shortName>
    </alternativeName>
    <alternativeName>
        <fullName evidence="1">ADP-glucose synthase</fullName>
    </alternativeName>
</protein>
<proteinExistence type="inferred from homology"/>
<comment type="function">
    <text evidence="1">Involved in the biosynthesis of ADP-glucose, a building block required for the elongation reactions to produce glycogen. Catalyzes the reaction between ATP and alpha-D-glucose 1-phosphate (G1P) to produce pyrophosphate and ADP-Glc.</text>
</comment>
<comment type="catalytic activity">
    <reaction evidence="1">
        <text>alpha-D-glucose 1-phosphate + ATP + H(+) = ADP-alpha-D-glucose + diphosphate</text>
        <dbReference type="Rhea" id="RHEA:12120"/>
        <dbReference type="ChEBI" id="CHEBI:15378"/>
        <dbReference type="ChEBI" id="CHEBI:30616"/>
        <dbReference type="ChEBI" id="CHEBI:33019"/>
        <dbReference type="ChEBI" id="CHEBI:57498"/>
        <dbReference type="ChEBI" id="CHEBI:58601"/>
        <dbReference type="EC" id="2.7.7.27"/>
    </reaction>
</comment>
<comment type="activity regulation">
    <text evidence="1">Allosterically activated by fructose-1,6-bisphosphate (F16BP) and inhibited by AMP.</text>
</comment>
<comment type="pathway">
    <text evidence="1">Glycan biosynthesis; glycogen biosynthesis.</text>
</comment>
<comment type="subunit">
    <text evidence="1">Homotetramer.</text>
</comment>
<comment type="similarity">
    <text evidence="1">Belongs to the bacterial/plant glucose-1-phosphate adenylyltransferase family.</text>
</comment>
<evidence type="ECO:0000255" key="1">
    <source>
        <dbReference type="HAMAP-Rule" id="MF_00624"/>
    </source>
</evidence>
<reference key="1">
    <citation type="journal article" date="2001" name="Nature">
        <title>Complete genome sequence of a multiple drug resistant Salmonella enterica serovar Typhi CT18.</title>
        <authorList>
            <person name="Parkhill J."/>
            <person name="Dougan G."/>
            <person name="James K.D."/>
            <person name="Thomson N.R."/>
            <person name="Pickard D."/>
            <person name="Wain J."/>
            <person name="Churcher C.M."/>
            <person name="Mungall K.L."/>
            <person name="Bentley S.D."/>
            <person name="Holden M.T.G."/>
            <person name="Sebaihia M."/>
            <person name="Baker S."/>
            <person name="Basham D."/>
            <person name="Brooks K."/>
            <person name="Chillingworth T."/>
            <person name="Connerton P."/>
            <person name="Cronin A."/>
            <person name="Davis P."/>
            <person name="Davies R.M."/>
            <person name="Dowd L."/>
            <person name="White N."/>
            <person name="Farrar J."/>
            <person name="Feltwell T."/>
            <person name="Hamlin N."/>
            <person name="Haque A."/>
            <person name="Hien T.T."/>
            <person name="Holroyd S."/>
            <person name="Jagels K."/>
            <person name="Krogh A."/>
            <person name="Larsen T.S."/>
            <person name="Leather S."/>
            <person name="Moule S."/>
            <person name="O'Gaora P."/>
            <person name="Parry C."/>
            <person name="Quail M.A."/>
            <person name="Rutherford K.M."/>
            <person name="Simmonds M."/>
            <person name="Skelton J."/>
            <person name="Stevens K."/>
            <person name="Whitehead S."/>
            <person name="Barrell B.G."/>
        </authorList>
    </citation>
    <scope>NUCLEOTIDE SEQUENCE [LARGE SCALE GENOMIC DNA]</scope>
    <source>
        <strain>CT18</strain>
    </source>
</reference>
<reference key="2">
    <citation type="journal article" date="2003" name="J. Bacteriol.">
        <title>Comparative genomics of Salmonella enterica serovar Typhi strains Ty2 and CT18.</title>
        <authorList>
            <person name="Deng W."/>
            <person name="Liou S.-R."/>
            <person name="Plunkett G. III"/>
            <person name="Mayhew G.F."/>
            <person name="Rose D.J."/>
            <person name="Burland V."/>
            <person name="Kodoyianni V."/>
            <person name="Schwartz D.C."/>
            <person name="Blattner F.R."/>
        </authorList>
    </citation>
    <scope>NUCLEOTIDE SEQUENCE [LARGE SCALE GENOMIC DNA]</scope>
    <source>
        <strain>ATCC 700931 / Ty2</strain>
    </source>
</reference>
<feature type="chain" id="PRO_0000195326" description="Glucose-1-phosphate adenylyltransferase">
    <location>
        <begin position="1"/>
        <end position="431"/>
    </location>
</feature>
<feature type="binding site" evidence="1">
    <location>
        <position position="39"/>
    </location>
    <ligand>
        <name>beta-D-fructose 1,6-bisphosphate</name>
        <dbReference type="ChEBI" id="CHEBI:32966"/>
    </ligand>
</feature>
<feature type="binding site" evidence="1">
    <location>
        <position position="40"/>
    </location>
    <ligand>
        <name>AMP</name>
        <dbReference type="ChEBI" id="CHEBI:456215"/>
    </ligand>
</feature>
<feature type="binding site" evidence="1">
    <location>
        <position position="46"/>
    </location>
    <ligand>
        <name>AMP</name>
        <dbReference type="ChEBI" id="CHEBI:456215"/>
    </ligand>
</feature>
<feature type="binding site" evidence="1">
    <location>
        <position position="52"/>
    </location>
    <ligand>
        <name>AMP</name>
        <dbReference type="ChEBI" id="CHEBI:456215"/>
    </ligand>
</feature>
<feature type="binding site" evidence="1">
    <location>
        <position position="114"/>
    </location>
    <ligand>
        <name>alpha-D-glucose 1-phosphate</name>
        <dbReference type="ChEBI" id="CHEBI:58601"/>
    </ligand>
</feature>
<feature type="binding site" evidence="1">
    <location>
        <position position="179"/>
    </location>
    <ligand>
        <name>alpha-D-glucose 1-phosphate</name>
        <dbReference type="ChEBI" id="CHEBI:58601"/>
    </ligand>
</feature>
<feature type="binding site" evidence="1">
    <location>
        <begin position="194"/>
        <end position="195"/>
    </location>
    <ligand>
        <name>alpha-D-glucose 1-phosphate</name>
        <dbReference type="ChEBI" id="CHEBI:58601"/>
    </ligand>
</feature>
<feature type="binding site" evidence="1">
    <location>
        <position position="212"/>
    </location>
    <ligand>
        <name>alpha-D-glucose 1-phosphate</name>
        <dbReference type="ChEBI" id="CHEBI:58601"/>
    </ligand>
</feature>
<feature type="binding site" evidence="1">
    <location>
        <position position="370"/>
    </location>
    <ligand>
        <name>AMP</name>
        <dbReference type="ChEBI" id="CHEBI:456215"/>
    </ligand>
</feature>
<feature type="binding site" evidence="1">
    <location>
        <position position="386"/>
    </location>
    <ligand>
        <name>AMP</name>
        <dbReference type="ChEBI" id="CHEBI:456215"/>
    </ligand>
</feature>
<feature type="binding site" evidence="1">
    <location>
        <begin position="419"/>
        <end position="423"/>
    </location>
    <ligand>
        <name>beta-D-fructose 1,6-bisphosphate</name>
        <dbReference type="ChEBI" id="CHEBI:32966"/>
    </ligand>
</feature>
<feature type="binding site" evidence="1">
    <location>
        <begin position="429"/>
        <end position="431"/>
    </location>
    <ligand>
        <name>beta-D-fructose 1,6-bisphosphate</name>
        <dbReference type="ChEBI" id="CHEBI:32966"/>
    </ligand>
</feature>
<feature type="site" description="Could play a key role in the communication between the regulatory and the substrate sites" evidence="1">
    <location>
        <position position="74"/>
    </location>
</feature>
<feature type="site" description="Could play a key role in the communication between the regulatory and the substrate sites" evidence="1">
    <location>
        <position position="113"/>
    </location>
</feature>
<sequence length="431" mass="48436">MVSLEKNDRVMLARQLPLKSVALILAGGRGTRLKDLTNKRAKPAVHFGGKFRIIDFALSNCLNSGIRRIGVITQYQSHTLVQHIQRGWSLFSEEMNEFVDLLPAQQRMKGENWYRGTADAVTQNLDIIRCYKAEYVVILAGDHIYKQDYSRMLIDHVEKGARCTVACMPVPIKEATAFGVMAVDENDKIIDFVEKPANPPAMPGDASKSLASMGIYVFDADYLYELLAADDKDDASSHDFGKDIIPKITREGMAYAHPFPLSCVQSDPQAEPYWRDVGTLEAYWKANLDLASVTPELDMYDQNWPIRTHMESLPPAKFVQDRSGSHGMTLNSLVSGGCIISGSVVVQSVLFPRVRINSFCNIDSAVLLPEVWVGRSCRLRRCVIDRACIIPEGMVIGENAEEDARRFYRSEEGIVLVTREMLRKLQVKQER</sequence>
<accession>Q8Z233</accession>
<name>GLGC_SALTI</name>
<dbReference type="EC" id="2.7.7.27" evidence="1"/>
<dbReference type="EMBL" id="AL513382">
    <property type="protein sequence ID" value="CAD08092.1"/>
    <property type="molecule type" value="Genomic_DNA"/>
</dbReference>
<dbReference type="EMBL" id="AE014613">
    <property type="protein sequence ID" value="AAO71454.1"/>
    <property type="molecule type" value="Genomic_DNA"/>
</dbReference>
<dbReference type="RefSeq" id="NP_458382.1">
    <property type="nucleotide sequence ID" value="NC_003198.1"/>
</dbReference>
<dbReference type="RefSeq" id="WP_000253993.1">
    <property type="nucleotide sequence ID" value="NZ_WSUR01000001.1"/>
</dbReference>
<dbReference type="SMR" id="Q8Z233"/>
<dbReference type="STRING" id="220341.gene:17588105"/>
<dbReference type="KEGG" id="stt:t3984"/>
<dbReference type="KEGG" id="sty:STY4274"/>
<dbReference type="PATRIC" id="fig|220341.7.peg.4367"/>
<dbReference type="eggNOG" id="COG0448">
    <property type="taxonomic scope" value="Bacteria"/>
</dbReference>
<dbReference type="HOGENOM" id="CLU_029499_14_1_6"/>
<dbReference type="OMA" id="YPLTKMR"/>
<dbReference type="OrthoDB" id="9801810at2"/>
<dbReference type="UniPathway" id="UPA00164"/>
<dbReference type="Proteomes" id="UP000000541">
    <property type="component" value="Chromosome"/>
</dbReference>
<dbReference type="Proteomes" id="UP000002670">
    <property type="component" value="Chromosome"/>
</dbReference>
<dbReference type="GO" id="GO:0005524">
    <property type="term" value="F:ATP binding"/>
    <property type="evidence" value="ECO:0007669"/>
    <property type="project" value="UniProtKB-KW"/>
</dbReference>
<dbReference type="GO" id="GO:0008878">
    <property type="term" value="F:glucose-1-phosphate adenylyltransferase activity"/>
    <property type="evidence" value="ECO:0007669"/>
    <property type="project" value="UniProtKB-UniRule"/>
</dbReference>
<dbReference type="GO" id="GO:0005978">
    <property type="term" value="P:glycogen biosynthetic process"/>
    <property type="evidence" value="ECO:0007669"/>
    <property type="project" value="UniProtKB-UniRule"/>
</dbReference>
<dbReference type="CDD" id="cd02508">
    <property type="entry name" value="ADP_Glucose_PP"/>
    <property type="match status" value="1"/>
</dbReference>
<dbReference type="CDD" id="cd04651">
    <property type="entry name" value="LbH_G1P_AT_C"/>
    <property type="match status" value="1"/>
</dbReference>
<dbReference type="FunFam" id="2.160.10.10:FF:000006">
    <property type="entry name" value="Glucose-1-phosphate adenylyltransferase"/>
    <property type="match status" value="1"/>
</dbReference>
<dbReference type="FunFam" id="3.90.550.10:FF:000014">
    <property type="entry name" value="Glucose-1-phosphate adenylyltransferase"/>
    <property type="match status" value="1"/>
</dbReference>
<dbReference type="Gene3D" id="2.160.10.10">
    <property type="entry name" value="Hexapeptide repeat proteins"/>
    <property type="match status" value="1"/>
</dbReference>
<dbReference type="Gene3D" id="3.90.550.10">
    <property type="entry name" value="Spore Coat Polysaccharide Biosynthesis Protein SpsA, Chain A"/>
    <property type="match status" value="1"/>
</dbReference>
<dbReference type="HAMAP" id="MF_00624">
    <property type="entry name" value="GlgC"/>
    <property type="match status" value="1"/>
</dbReference>
<dbReference type="InterPro" id="IPR011831">
    <property type="entry name" value="ADP-Glc_PPase"/>
</dbReference>
<dbReference type="InterPro" id="IPR005836">
    <property type="entry name" value="ADP_Glu_pyroP_CS"/>
</dbReference>
<dbReference type="InterPro" id="IPR023049">
    <property type="entry name" value="GlgC_bac"/>
</dbReference>
<dbReference type="InterPro" id="IPR056818">
    <property type="entry name" value="GlmU/GlgC-like_hexapep"/>
</dbReference>
<dbReference type="InterPro" id="IPR005835">
    <property type="entry name" value="NTP_transferase_dom"/>
</dbReference>
<dbReference type="InterPro" id="IPR029044">
    <property type="entry name" value="Nucleotide-diphossugar_trans"/>
</dbReference>
<dbReference type="InterPro" id="IPR011004">
    <property type="entry name" value="Trimer_LpxA-like_sf"/>
</dbReference>
<dbReference type="NCBIfam" id="TIGR02091">
    <property type="entry name" value="glgC"/>
    <property type="match status" value="1"/>
</dbReference>
<dbReference type="NCBIfam" id="NF001947">
    <property type="entry name" value="PRK00725.1"/>
    <property type="match status" value="1"/>
</dbReference>
<dbReference type="NCBIfam" id="NF002023">
    <property type="entry name" value="PRK00844.1"/>
    <property type="match status" value="1"/>
</dbReference>
<dbReference type="PANTHER" id="PTHR43523:SF2">
    <property type="entry name" value="GLUCOSE-1-PHOSPHATE ADENYLYLTRANSFERASE"/>
    <property type="match status" value="1"/>
</dbReference>
<dbReference type="PANTHER" id="PTHR43523">
    <property type="entry name" value="GLUCOSE-1-PHOSPHATE ADENYLYLTRANSFERASE-RELATED"/>
    <property type="match status" value="1"/>
</dbReference>
<dbReference type="Pfam" id="PF24894">
    <property type="entry name" value="Hexapep_GlmU"/>
    <property type="match status" value="1"/>
</dbReference>
<dbReference type="Pfam" id="PF00483">
    <property type="entry name" value="NTP_transferase"/>
    <property type="match status" value="1"/>
</dbReference>
<dbReference type="SUPFAM" id="SSF53448">
    <property type="entry name" value="Nucleotide-diphospho-sugar transferases"/>
    <property type="match status" value="1"/>
</dbReference>
<dbReference type="SUPFAM" id="SSF51161">
    <property type="entry name" value="Trimeric LpxA-like enzymes"/>
    <property type="match status" value="1"/>
</dbReference>
<dbReference type="PROSITE" id="PS00808">
    <property type="entry name" value="ADP_GLC_PYROPHOSPH_1"/>
    <property type="match status" value="1"/>
</dbReference>
<dbReference type="PROSITE" id="PS00809">
    <property type="entry name" value="ADP_GLC_PYROPHOSPH_2"/>
    <property type="match status" value="1"/>
</dbReference>
<dbReference type="PROSITE" id="PS00810">
    <property type="entry name" value="ADP_GLC_PYROPHOSPH_3"/>
    <property type="match status" value="1"/>
</dbReference>